<dbReference type="EMBL" id="AL123456">
    <property type="protein sequence ID" value="CCP45176.1"/>
    <property type="status" value="ALT_INIT"/>
    <property type="molecule type" value="Genomic_DNA"/>
</dbReference>
<dbReference type="PIR" id="G70681">
    <property type="entry name" value="G70681"/>
</dbReference>
<dbReference type="RefSeq" id="NP_216904.1">
    <property type="nucleotide sequence ID" value="NC_000962.3"/>
</dbReference>
<dbReference type="RefSeq" id="WP_003412290.1">
    <property type="nucleotide sequence ID" value="NZ_NVQJ01000029.1"/>
</dbReference>
<dbReference type="RefSeq" id="WP_003901389.1">
    <property type="nucleotide sequence ID" value="NC_000962.3"/>
</dbReference>
<dbReference type="SMR" id="P9WP73"/>
<dbReference type="FunCoup" id="P9WP73">
    <property type="interactions" value="237"/>
</dbReference>
<dbReference type="STRING" id="83332.Rv2388c"/>
<dbReference type="PaxDb" id="83332-Rv2388c"/>
<dbReference type="DNASU" id="885300"/>
<dbReference type="GeneID" id="885300"/>
<dbReference type="KEGG" id="mtu:Rv2388c"/>
<dbReference type="PATRIC" id="fig|83332.111.peg.2663"/>
<dbReference type="TubercuList" id="Rv2388c"/>
<dbReference type="eggNOG" id="COG0635">
    <property type="taxonomic scope" value="Bacteria"/>
</dbReference>
<dbReference type="InParanoid" id="P9WP73"/>
<dbReference type="OrthoDB" id="9808022at2"/>
<dbReference type="PhylomeDB" id="P9WP73"/>
<dbReference type="Proteomes" id="UP000001584">
    <property type="component" value="Chromosome"/>
</dbReference>
<dbReference type="GO" id="GO:0005737">
    <property type="term" value="C:cytoplasm"/>
    <property type="evidence" value="ECO:0000250"/>
    <property type="project" value="UniProtKB"/>
</dbReference>
<dbReference type="GO" id="GO:0051539">
    <property type="term" value="F:4 iron, 4 sulfur cluster binding"/>
    <property type="evidence" value="ECO:0000250"/>
    <property type="project" value="UniProtKB"/>
</dbReference>
<dbReference type="GO" id="GO:0004109">
    <property type="term" value="F:coproporphyrinogen oxidase activity"/>
    <property type="evidence" value="ECO:0007669"/>
    <property type="project" value="InterPro"/>
</dbReference>
<dbReference type="GO" id="GO:0046872">
    <property type="term" value="F:metal ion binding"/>
    <property type="evidence" value="ECO:0007669"/>
    <property type="project" value="UniProtKB-KW"/>
</dbReference>
<dbReference type="GO" id="GO:0006779">
    <property type="term" value="P:porphyrin-containing compound biosynthetic process"/>
    <property type="evidence" value="ECO:0000250"/>
    <property type="project" value="UniProtKB"/>
</dbReference>
<dbReference type="Gene3D" id="3.20.20.70">
    <property type="entry name" value="Aldolase class I"/>
    <property type="match status" value="1"/>
</dbReference>
<dbReference type="InterPro" id="IPR013785">
    <property type="entry name" value="Aldolase_TIM"/>
</dbReference>
<dbReference type="InterPro" id="IPR034505">
    <property type="entry name" value="Coproporphyrinogen-III_oxidase"/>
</dbReference>
<dbReference type="InterPro" id="IPR006638">
    <property type="entry name" value="Elp3/MiaA/NifB-like_rSAM"/>
</dbReference>
<dbReference type="InterPro" id="IPR004559">
    <property type="entry name" value="HemW-like"/>
</dbReference>
<dbReference type="InterPro" id="IPR007197">
    <property type="entry name" value="rSAM"/>
</dbReference>
<dbReference type="NCBIfam" id="TIGR00539">
    <property type="entry name" value="hemN_rel"/>
    <property type="match status" value="1"/>
</dbReference>
<dbReference type="PANTHER" id="PTHR13932">
    <property type="entry name" value="COPROPORPHYRINIGEN III OXIDASE"/>
    <property type="match status" value="1"/>
</dbReference>
<dbReference type="PANTHER" id="PTHR13932:SF5">
    <property type="entry name" value="RADICAL S-ADENOSYL METHIONINE DOMAIN-CONTAINING PROTEIN 1, MITOCHONDRIAL"/>
    <property type="match status" value="1"/>
</dbReference>
<dbReference type="Pfam" id="PF04055">
    <property type="entry name" value="Radical_SAM"/>
    <property type="match status" value="1"/>
</dbReference>
<dbReference type="SFLD" id="SFLDF00562">
    <property type="entry name" value="HemN-like__clustered_with_heat"/>
    <property type="match status" value="1"/>
</dbReference>
<dbReference type="SFLD" id="SFLDF00288">
    <property type="entry name" value="HemN-like__clustered_with_nucl"/>
    <property type="match status" value="1"/>
</dbReference>
<dbReference type="SFLD" id="SFLDS00029">
    <property type="entry name" value="Radical_SAM"/>
    <property type="match status" value="1"/>
</dbReference>
<dbReference type="SMART" id="SM00729">
    <property type="entry name" value="Elp3"/>
    <property type="match status" value="1"/>
</dbReference>
<dbReference type="SUPFAM" id="SSF102114">
    <property type="entry name" value="Radical SAM enzymes"/>
    <property type="match status" value="1"/>
</dbReference>
<dbReference type="PROSITE" id="PS51918">
    <property type="entry name" value="RADICAL_SAM"/>
    <property type="match status" value="1"/>
</dbReference>
<proteinExistence type="evidence at protein level"/>
<comment type="function">
    <text evidence="1 2">Probably acts as a heme chaperone, transferring heme to an unknown acceptor. Binds one molecule of heme per monomer, possibly covalently (By similarity). Binds 1 [4Fe-4S] cluster. The cluster is coordinated with 3 cysteines and an exchangeable S-adenosyl-L-methionine (By similarity).</text>
</comment>
<comment type="cofactor">
    <cofactor evidence="4">
        <name>[4Fe-4S] cluster</name>
        <dbReference type="ChEBI" id="CHEBI:49883"/>
    </cofactor>
</comment>
<comment type="subcellular location">
    <subcellularLocation>
        <location evidence="3">Cytoplasm</location>
    </subcellularLocation>
</comment>
<comment type="miscellaneous">
    <text>Was identified as a high-confidence drug target.</text>
</comment>
<comment type="miscellaneous">
    <text evidence="1">Might carry two S-adenosyl-L-methionine binding sites with only one binding to the iron-sulfur cluster.</text>
</comment>
<comment type="similarity">
    <text evidence="6">Belongs to the anaerobic coproporphyrinogen-III oxidase family. HemW subfamily.</text>
</comment>
<comment type="sequence caution" evidence="5">
    <conflict type="erroneous initiation">
        <sequence resource="EMBL-CDS" id="CCP45176"/>
    </conflict>
    <text>Truncated N-terminus.</text>
</comment>
<protein>
    <recommendedName>
        <fullName>Heme chaperone HemW</fullName>
    </recommendedName>
    <alternativeName>
        <fullName>Oxygen-independent coproporphyrinogen-III oxidase-like protein Rv2388c</fullName>
    </alternativeName>
</protein>
<accession>P9WP73</accession>
<accession>L0TCD5</accession>
<accession>P71756</accession>
<evidence type="ECO:0000250" key="1">
    <source>
        <dbReference type="UniProtKB" id="P32131"/>
    </source>
</evidence>
<evidence type="ECO:0000250" key="2">
    <source>
        <dbReference type="UniProtKB" id="P52062"/>
    </source>
</evidence>
<evidence type="ECO:0000250" key="3">
    <source>
        <dbReference type="UniProtKB" id="Q9CGF7"/>
    </source>
</evidence>
<evidence type="ECO:0000255" key="4">
    <source>
        <dbReference type="PROSITE-ProRule" id="PRU01266"/>
    </source>
</evidence>
<evidence type="ECO:0000269" key="5">
    <source>
    </source>
</evidence>
<evidence type="ECO:0000305" key="6"/>
<keyword id="KW-0004">4Fe-4S</keyword>
<keyword id="KW-0143">Chaperone</keyword>
<keyword id="KW-0963">Cytoplasm</keyword>
<keyword id="KW-0903">Direct protein sequencing</keyword>
<keyword id="KW-0349">Heme</keyword>
<keyword id="KW-0408">Iron</keyword>
<keyword id="KW-0411">Iron-sulfur</keyword>
<keyword id="KW-0479">Metal-binding</keyword>
<keyword id="KW-1185">Reference proteome</keyword>
<keyword id="KW-0949">S-adenosyl-L-methionine</keyword>
<feature type="chain" id="PRO_0000109944" description="Heme chaperone HemW">
    <location>
        <begin position="1"/>
        <end position="390"/>
    </location>
</feature>
<feature type="domain" description="Radical SAM core" evidence="4">
    <location>
        <begin position="15"/>
        <end position="254"/>
    </location>
</feature>
<feature type="binding site" evidence="1">
    <location>
        <position position="24"/>
    </location>
    <ligand>
        <name>S-adenosyl-L-methionine</name>
        <dbReference type="ChEBI" id="CHEBI:59789"/>
        <label>1</label>
    </ligand>
</feature>
<feature type="binding site" evidence="1">
    <location>
        <position position="30"/>
    </location>
    <ligand>
        <name>[4Fe-4S] cluster</name>
        <dbReference type="ChEBI" id="CHEBI:49883"/>
        <note>4Fe-4S-S-AdoMet</note>
    </ligand>
</feature>
<feature type="binding site" evidence="1">
    <location>
        <position position="34"/>
    </location>
    <ligand>
        <name>[4Fe-4S] cluster</name>
        <dbReference type="ChEBI" id="CHEBI:49883"/>
        <note>4Fe-4S-S-AdoMet</note>
    </ligand>
</feature>
<feature type="binding site" evidence="1">
    <location>
        <position position="37"/>
    </location>
    <ligand>
        <name>[4Fe-4S] cluster</name>
        <dbReference type="ChEBI" id="CHEBI:49883"/>
        <note>4Fe-4S-S-AdoMet</note>
    </ligand>
</feature>
<feature type="binding site" evidence="1">
    <location>
        <position position="82"/>
    </location>
    <ligand>
        <name>S-adenosyl-L-methionine</name>
        <dbReference type="ChEBI" id="CHEBI:59789"/>
        <label>1</label>
    </ligand>
</feature>
<feature type="binding site" evidence="1">
    <location>
        <begin position="83"/>
        <end position="84"/>
    </location>
    <ligand>
        <name>S-adenosyl-L-methionine</name>
        <dbReference type="ChEBI" id="CHEBI:59789"/>
        <label>2</label>
    </ligand>
</feature>
<feature type="binding site" evidence="1">
    <location>
        <position position="115"/>
    </location>
    <ligand>
        <name>S-adenosyl-L-methionine</name>
        <dbReference type="ChEBI" id="CHEBI:59789"/>
        <label>1</label>
    </ligand>
</feature>
<feature type="binding site" evidence="1">
    <location>
        <position position="142"/>
    </location>
    <ligand>
        <name>S-adenosyl-L-methionine</name>
        <dbReference type="ChEBI" id="CHEBI:59789"/>
        <label>2</label>
    </ligand>
</feature>
<feature type="binding site" evidence="1">
    <location>
        <position position="154"/>
    </location>
    <ligand>
        <name>S-adenosyl-L-methionine</name>
        <dbReference type="ChEBI" id="CHEBI:59789"/>
        <label>2</label>
    </ligand>
</feature>
<feature type="binding site" evidence="1">
    <location>
        <position position="179"/>
    </location>
    <ligand>
        <name>S-adenosyl-L-methionine</name>
        <dbReference type="ChEBI" id="CHEBI:59789"/>
        <label>2</label>
    </ligand>
</feature>
<sequence length="390" mass="41941">MVFRQAPVELPGLAPMPGQPFGVYLHVPFCLTRCGYCDFNTYTPAQLGGVSPDRWLLALRAELELAAAKLDAPTVHTVYVGGGTPSLLGGERLATLLDMVRDHFVLAPDAEVSTEANPESTWPEFFATIRAAGYTRVSLGMQSVAPRVLATLDRVHSPGRAAAAATEAIAEGFTHVNLDLIYGTPGESDDDLVRSVDAAVQAGVDHVSAYALVVEHGTALARRVRRGELAAPDDDVLAHRYELVDARLSAAGFAWYEVSNWCRPGGECRHNLGYWDGGQWWGAGPGAHGYIGVTRWWNVKHPNTYAEILAGATLPVAGFEQLGADALHTEDVLLKVRLRQGLPLARLGAAERERAEAVLADGLLDYHGDRLVLTGRGRLLADAVVRTLLG</sequence>
<gene>
    <name evidence="2" type="primary">hemW</name>
    <name type="synonym">hemN</name>
    <name type="ordered locus">Rv2388c</name>
    <name type="ORF">MTCY253.33</name>
</gene>
<organism>
    <name type="scientific">Mycobacterium tuberculosis (strain ATCC 25618 / H37Rv)</name>
    <dbReference type="NCBI Taxonomy" id="83332"/>
    <lineage>
        <taxon>Bacteria</taxon>
        <taxon>Bacillati</taxon>
        <taxon>Actinomycetota</taxon>
        <taxon>Actinomycetes</taxon>
        <taxon>Mycobacteriales</taxon>
        <taxon>Mycobacteriaceae</taxon>
        <taxon>Mycobacterium</taxon>
        <taxon>Mycobacterium tuberculosis complex</taxon>
    </lineage>
</organism>
<reference key="1">
    <citation type="journal article" date="1998" name="Nature">
        <title>Deciphering the biology of Mycobacterium tuberculosis from the complete genome sequence.</title>
        <authorList>
            <person name="Cole S.T."/>
            <person name="Brosch R."/>
            <person name="Parkhill J."/>
            <person name="Garnier T."/>
            <person name="Churcher C.M."/>
            <person name="Harris D.E."/>
            <person name="Gordon S.V."/>
            <person name="Eiglmeier K."/>
            <person name="Gas S."/>
            <person name="Barry C.E. III"/>
            <person name="Tekaia F."/>
            <person name="Badcock K."/>
            <person name="Basham D."/>
            <person name="Brown D."/>
            <person name="Chillingworth T."/>
            <person name="Connor R."/>
            <person name="Davies R.M."/>
            <person name="Devlin K."/>
            <person name="Feltwell T."/>
            <person name="Gentles S."/>
            <person name="Hamlin N."/>
            <person name="Holroyd S."/>
            <person name="Hornsby T."/>
            <person name="Jagels K."/>
            <person name="Krogh A."/>
            <person name="McLean J."/>
            <person name="Moule S."/>
            <person name="Murphy L.D."/>
            <person name="Oliver S."/>
            <person name="Osborne J."/>
            <person name="Quail M.A."/>
            <person name="Rajandream M.A."/>
            <person name="Rogers J."/>
            <person name="Rutter S."/>
            <person name="Seeger K."/>
            <person name="Skelton S."/>
            <person name="Squares S."/>
            <person name="Squares R."/>
            <person name="Sulston J.E."/>
            <person name="Taylor K."/>
            <person name="Whitehead S."/>
            <person name="Barrell B.G."/>
        </authorList>
    </citation>
    <scope>NUCLEOTIDE SEQUENCE [LARGE SCALE GENOMIC DNA]</scope>
    <source>
        <strain>ATCC 25618 / H37Rv</strain>
    </source>
</reference>
<reference key="2">
    <citation type="journal article" date="2022" name="Genomics">
        <title>Deep N-terminomics of Mycobacterium tuberculosis H37Rv extensively correct annotated encoding genes.</title>
        <authorList>
            <person name="Shi J."/>
            <person name="Meng S."/>
            <person name="Wan L."/>
            <person name="Zhang Z."/>
            <person name="Jiang S."/>
            <person name="Zhu H."/>
            <person name="Dai E."/>
            <person name="Chang L."/>
            <person name="Gao H."/>
            <person name="Wan K."/>
            <person name="Zhang L."/>
            <person name="Zhao X."/>
            <person name="Liu H."/>
            <person name="Lyu Z."/>
            <person name="Zhang Y."/>
            <person name="Xu P."/>
        </authorList>
    </citation>
    <scope>PROTEIN SEQUENCE OF 5-33</scope>
    <scope>SEQUENCE REVISION TO N-TERMINUS</scope>
    <source>
        <strain>H37Rv</strain>
    </source>
</reference>
<reference key="3">
    <citation type="journal article" date="2008" name="BMC Syst. Biol.">
        <title>targetTB: a target identification pipeline for Mycobacterium tuberculosis through an interactome, reactome and genome-scale structural analysis.</title>
        <authorList>
            <person name="Raman K."/>
            <person name="Yeturu K."/>
            <person name="Chandra N."/>
        </authorList>
    </citation>
    <scope>IDENTIFICATION AS A DRUG TARGET [LARGE SCALE ANALYSIS]</scope>
</reference>
<reference key="4">
    <citation type="journal article" date="2011" name="Mol. Cell. Proteomics">
        <title>Proteogenomic analysis of Mycobacterium tuberculosis by high resolution mass spectrometry.</title>
        <authorList>
            <person name="Kelkar D.S."/>
            <person name="Kumar D."/>
            <person name="Kumar P."/>
            <person name="Balakrishnan L."/>
            <person name="Muthusamy B."/>
            <person name="Yadav A.K."/>
            <person name="Shrivastava P."/>
            <person name="Marimuthu A."/>
            <person name="Anand S."/>
            <person name="Sundaram H."/>
            <person name="Kingsbury R."/>
            <person name="Harsha H.C."/>
            <person name="Nair B."/>
            <person name="Prasad T.S."/>
            <person name="Chauhan D.S."/>
            <person name="Katoch K."/>
            <person name="Katoch V.M."/>
            <person name="Kumar P."/>
            <person name="Chaerkady R."/>
            <person name="Ramachandran S."/>
            <person name="Dash D."/>
            <person name="Pandey A."/>
        </authorList>
    </citation>
    <scope>IDENTIFICATION BY MASS SPECTROMETRY [LARGE SCALE ANALYSIS]</scope>
    <source>
        <strain>ATCC 25618 / H37Rv</strain>
    </source>
</reference>
<name>HEMW_MYCTU</name>